<accession>Q6Y8J7</accession>
<organism>
    <name type="scientific">Uroderma magnirostrum</name>
    <name type="common">Brown tent-making bat</name>
    <dbReference type="NCBI Taxonomy" id="221446"/>
    <lineage>
        <taxon>Eukaryota</taxon>
        <taxon>Metazoa</taxon>
        <taxon>Chordata</taxon>
        <taxon>Craniata</taxon>
        <taxon>Vertebrata</taxon>
        <taxon>Euteleostomi</taxon>
        <taxon>Mammalia</taxon>
        <taxon>Eutheria</taxon>
        <taxon>Laurasiatheria</taxon>
        <taxon>Chiroptera</taxon>
        <taxon>Yangochiroptera</taxon>
        <taxon>Phyllostomidae</taxon>
        <taxon>Stenodermatinae</taxon>
        <taxon>Uroderma</taxon>
    </lineage>
</organism>
<evidence type="ECO:0000250" key="1"/>
<evidence type="ECO:0000250" key="2">
    <source>
        <dbReference type="UniProtKB" id="P00157"/>
    </source>
</evidence>
<evidence type="ECO:0000255" key="3">
    <source>
        <dbReference type="PROSITE-ProRule" id="PRU00967"/>
    </source>
</evidence>
<evidence type="ECO:0000255" key="4">
    <source>
        <dbReference type="PROSITE-ProRule" id="PRU00968"/>
    </source>
</evidence>
<name>CYB_UROMA</name>
<gene>
    <name type="primary">MT-CYB</name>
    <name type="synonym">COB</name>
    <name type="synonym">CYTB</name>
    <name type="synonym">MTCYB</name>
</gene>
<geneLocation type="mitochondrion"/>
<protein>
    <recommendedName>
        <fullName>Cytochrome b</fullName>
    </recommendedName>
    <alternativeName>
        <fullName>Complex III subunit 3</fullName>
    </alternativeName>
    <alternativeName>
        <fullName>Complex III subunit III</fullName>
    </alternativeName>
    <alternativeName>
        <fullName>Cytochrome b-c1 complex subunit 3</fullName>
    </alternativeName>
    <alternativeName>
        <fullName>Ubiquinol-cytochrome-c reductase complex cytochrome b subunit</fullName>
    </alternativeName>
</protein>
<reference key="1">
    <citation type="journal article" date="2003" name="Mol. Ecol.">
        <title>mtDNA perspective of chromosomal diversification and hybridization in Peters' tent-making bat (Uroderma bilobatum: Phyllostomidae).</title>
        <authorList>
            <person name="Hoffmann F.G."/>
            <person name="Owen J.G."/>
            <person name="Baker R.J."/>
        </authorList>
    </citation>
    <scope>NUCLEOTIDE SEQUENCE [GENOMIC DNA]</scope>
    <source>
        <strain>Isolate TK 40046</strain>
        <strain>Isolate TK 40068</strain>
    </source>
</reference>
<feature type="chain" id="PRO_0000061699" description="Cytochrome b">
    <location>
        <begin position="1"/>
        <end position="379"/>
    </location>
</feature>
<feature type="transmembrane region" description="Helical" evidence="2">
    <location>
        <begin position="33"/>
        <end position="53"/>
    </location>
</feature>
<feature type="transmembrane region" description="Helical" evidence="2">
    <location>
        <begin position="77"/>
        <end position="98"/>
    </location>
</feature>
<feature type="transmembrane region" description="Helical" evidence="2">
    <location>
        <begin position="113"/>
        <end position="133"/>
    </location>
</feature>
<feature type="transmembrane region" description="Helical" evidence="2">
    <location>
        <begin position="178"/>
        <end position="198"/>
    </location>
</feature>
<feature type="transmembrane region" description="Helical" evidence="2">
    <location>
        <begin position="226"/>
        <end position="246"/>
    </location>
</feature>
<feature type="transmembrane region" description="Helical" evidence="2">
    <location>
        <begin position="288"/>
        <end position="308"/>
    </location>
</feature>
<feature type="transmembrane region" description="Helical" evidence="2">
    <location>
        <begin position="320"/>
        <end position="340"/>
    </location>
</feature>
<feature type="transmembrane region" description="Helical" evidence="2">
    <location>
        <begin position="347"/>
        <end position="367"/>
    </location>
</feature>
<feature type="binding site" description="axial binding residue" evidence="2">
    <location>
        <position position="83"/>
    </location>
    <ligand>
        <name>heme b</name>
        <dbReference type="ChEBI" id="CHEBI:60344"/>
        <label>b562</label>
    </ligand>
    <ligandPart>
        <name>Fe</name>
        <dbReference type="ChEBI" id="CHEBI:18248"/>
    </ligandPart>
</feature>
<feature type="binding site" description="axial binding residue" evidence="2">
    <location>
        <position position="97"/>
    </location>
    <ligand>
        <name>heme b</name>
        <dbReference type="ChEBI" id="CHEBI:60344"/>
        <label>b566</label>
    </ligand>
    <ligandPart>
        <name>Fe</name>
        <dbReference type="ChEBI" id="CHEBI:18248"/>
    </ligandPart>
</feature>
<feature type="binding site" description="axial binding residue" evidence="2">
    <location>
        <position position="182"/>
    </location>
    <ligand>
        <name>heme b</name>
        <dbReference type="ChEBI" id="CHEBI:60344"/>
        <label>b562</label>
    </ligand>
    <ligandPart>
        <name>Fe</name>
        <dbReference type="ChEBI" id="CHEBI:18248"/>
    </ligandPart>
</feature>
<feature type="binding site" description="axial binding residue" evidence="2">
    <location>
        <position position="196"/>
    </location>
    <ligand>
        <name>heme b</name>
        <dbReference type="ChEBI" id="CHEBI:60344"/>
        <label>b566</label>
    </ligand>
    <ligandPart>
        <name>Fe</name>
        <dbReference type="ChEBI" id="CHEBI:18248"/>
    </ligandPart>
</feature>
<feature type="binding site" evidence="2">
    <location>
        <position position="201"/>
    </location>
    <ligand>
        <name>a ubiquinone</name>
        <dbReference type="ChEBI" id="CHEBI:16389"/>
    </ligand>
</feature>
<sequence>MTNIRKTHPLLKIINSSFVDLPAPSSLSSWWNFGSLLGVCLGVQILTGLFLAMHYTSDTATAFNSVTHICRDVNYGWLLRYLHANGASMFFICLYLHVGRGLYYGSYTYSETWNIGILLLFAVMATAFMGYVLPWGQMSFWGATVITNLLSAIPYIGTDLVQWIWGGFSVDKATLTRFFAFHFLLPFIVAALVMVHLLFLHETGSNNPTGIPSDPDMIPFHPYYTIKDILGFLIMLTALSSLVLFSPDLLGDPDNYIPANPLNTPPHIKPEWYFLFAYAILRSIPNKLGGVLALVMSILILAIVPTLHVSKQRSMMFRPLSQCLFWLLVAVLFTLTWIGGQPVEHPYIIIGQTASVLYFLIILILMPAISLTENYLLKW</sequence>
<keyword id="KW-0249">Electron transport</keyword>
<keyword id="KW-0349">Heme</keyword>
<keyword id="KW-0408">Iron</keyword>
<keyword id="KW-0472">Membrane</keyword>
<keyword id="KW-0479">Metal-binding</keyword>
<keyword id="KW-0496">Mitochondrion</keyword>
<keyword id="KW-0999">Mitochondrion inner membrane</keyword>
<keyword id="KW-0679">Respiratory chain</keyword>
<keyword id="KW-0812">Transmembrane</keyword>
<keyword id="KW-1133">Transmembrane helix</keyword>
<keyword id="KW-0813">Transport</keyword>
<keyword id="KW-0830">Ubiquinone</keyword>
<proteinExistence type="inferred from homology"/>
<comment type="function">
    <text evidence="2">Component of the ubiquinol-cytochrome c reductase complex (complex III or cytochrome b-c1 complex) that is part of the mitochondrial respiratory chain. The b-c1 complex mediates electron transfer from ubiquinol to cytochrome c. Contributes to the generation of a proton gradient across the mitochondrial membrane that is then used for ATP synthesis.</text>
</comment>
<comment type="cofactor">
    <cofactor evidence="2">
        <name>heme b</name>
        <dbReference type="ChEBI" id="CHEBI:60344"/>
    </cofactor>
    <text evidence="2">Binds 2 heme b groups non-covalently.</text>
</comment>
<comment type="subunit">
    <text evidence="2">The cytochrome bc1 complex contains 11 subunits: 3 respiratory subunits (MT-CYB, CYC1 and UQCRFS1), 2 core proteins (UQCRC1 and UQCRC2) and 6 low-molecular weight proteins (UQCRH/QCR6, UQCRB/QCR7, UQCRQ/QCR8, UQCR10/QCR9, UQCR11/QCR10 and a cleavage product of UQCRFS1). This cytochrome bc1 complex then forms a dimer.</text>
</comment>
<comment type="subcellular location">
    <subcellularLocation>
        <location evidence="2">Mitochondrion inner membrane</location>
        <topology evidence="2">Multi-pass membrane protein</topology>
    </subcellularLocation>
</comment>
<comment type="miscellaneous">
    <text evidence="1">Heme 1 (or BL or b562) is low-potential and absorbs at about 562 nm, and heme 2 (or BH or b566) is high-potential and absorbs at about 566 nm.</text>
</comment>
<comment type="similarity">
    <text evidence="3 4">Belongs to the cytochrome b family.</text>
</comment>
<comment type="caution">
    <text evidence="2">The full-length protein contains only eight transmembrane helices, not nine as predicted by bioinformatics tools.</text>
</comment>
<dbReference type="EMBL" id="AY169956">
    <property type="protein sequence ID" value="AAO41832.1"/>
    <property type="molecule type" value="Genomic_DNA"/>
</dbReference>
<dbReference type="EMBL" id="AY169957">
    <property type="protein sequence ID" value="AAO41833.1"/>
    <property type="molecule type" value="Genomic_DNA"/>
</dbReference>
<dbReference type="SMR" id="Q6Y8J7"/>
<dbReference type="GO" id="GO:0005743">
    <property type="term" value="C:mitochondrial inner membrane"/>
    <property type="evidence" value="ECO:0007669"/>
    <property type="project" value="UniProtKB-SubCell"/>
</dbReference>
<dbReference type="GO" id="GO:0045275">
    <property type="term" value="C:respiratory chain complex III"/>
    <property type="evidence" value="ECO:0007669"/>
    <property type="project" value="InterPro"/>
</dbReference>
<dbReference type="GO" id="GO:0046872">
    <property type="term" value="F:metal ion binding"/>
    <property type="evidence" value="ECO:0007669"/>
    <property type="project" value="UniProtKB-KW"/>
</dbReference>
<dbReference type="GO" id="GO:0008121">
    <property type="term" value="F:ubiquinol-cytochrome-c reductase activity"/>
    <property type="evidence" value="ECO:0007669"/>
    <property type="project" value="InterPro"/>
</dbReference>
<dbReference type="GO" id="GO:0006122">
    <property type="term" value="P:mitochondrial electron transport, ubiquinol to cytochrome c"/>
    <property type="evidence" value="ECO:0007669"/>
    <property type="project" value="TreeGrafter"/>
</dbReference>
<dbReference type="CDD" id="cd00290">
    <property type="entry name" value="cytochrome_b_C"/>
    <property type="match status" value="1"/>
</dbReference>
<dbReference type="CDD" id="cd00284">
    <property type="entry name" value="Cytochrome_b_N"/>
    <property type="match status" value="1"/>
</dbReference>
<dbReference type="FunFam" id="1.20.810.10:FF:000002">
    <property type="entry name" value="Cytochrome b"/>
    <property type="match status" value="1"/>
</dbReference>
<dbReference type="Gene3D" id="1.20.810.10">
    <property type="entry name" value="Cytochrome Bc1 Complex, Chain C"/>
    <property type="match status" value="1"/>
</dbReference>
<dbReference type="InterPro" id="IPR005798">
    <property type="entry name" value="Cyt_b/b6_C"/>
</dbReference>
<dbReference type="InterPro" id="IPR036150">
    <property type="entry name" value="Cyt_b/b6_C_sf"/>
</dbReference>
<dbReference type="InterPro" id="IPR005797">
    <property type="entry name" value="Cyt_b/b6_N"/>
</dbReference>
<dbReference type="InterPro" id="IPR027387">
    <property type="entry name" value="Cytb/b6-like_sf"/>
</dbReference>
<dbReference type="InterPro" id="IPR030689">
    <property type="entry name" value="Cytochrome_b"/>
</dbReference>
<dbReference type="InterPro" id="IPR048260">
    <property type="entry name" value="Cytochrome_b_C_euk/bac"/>
</dbReference>
<dbReference type="InterPro" id="IPR048259">
    <property type="entry name" value="Cytochrome_b_N_euk/bac"/>
</dbReference>
<dbReference type="InterPro" id="IPR016174">
    <property type="entry name" value="Di-haem_cyt_TM"/>
</dbReference>
<dbReference type="PANTHER" id="PTHR19271">
    <property type="entry name" value="CYTOCHROME B"/>
    <property type="match status" value="1"/>
</dbReference>
<dbReference type="PANTHER" id="PTHR19271:SF16">
    <property type="entry name" value="CYTOCHROME B"/>
    <property type="match status" value="1"/>
</dbReference>
<dbReference type="Pfam" id="PF00032">
    <property type="entry name" value="Cytochrom_B_C"/>
    <property type="match status" value="1"/>
</dbReference>
<dbReference type="Pfam" id="PF00033">
    <property type="entry name" value="Cytochrome_B"/>
    <property type="match status" value="1"/>
</dbReference>
<dbReference type="PIRSF" id="PIRSF038885">
    <property type="entry name" value="COB"/>
    <property type="match status" value="1"/>
</dbReference>
<dbReference type="SUPFAM" id="SSF81648">
    <property type="entry name" value="a domain/subunit of cytochrome bc1 complex (Ubiquinol-cytochrome c reductase)"/>
    <property type="match status" value="1"/>
</dbReference>
<dbReference type="SUPFAM" id="SSF81342">
    <property type="entry name" value="Transmembrane di-heme cytochromes"/>
    <property type="match status" value="1"/>
</dbReference>
<dbReference type="PROSITE" id="PS51003">
    <property type="entry name" value="CYTB_CTER"/>
    <property type="match status" value="1"/>
</dbReference>
<dbReference type="PROSITE" id="PS51002">
    <property type="entry name" value="CYTB_NTER"/>
    <property type="match status" value="1"/>
</dbReference>